<comment type="function">
    <text evidence="1">Essential cell division protein. May link together the upstream cell division proteins, which are predominantly cytoplasmic, with the downstream cell division proteins, which are predominantly periplasmic.</text>
</comment>
<comment type="subunit">
    <text evidence="1">Part of a complex composed of FtsB, FtsL and FtsQ.</text>
</comment>
<comment type="subcellular location">
    <subcellularLocation>
        <location evidence="1">Cell inner membrane</location>
        <topology evidence="1">Single-pass type II membrane protein</topology>
    </subcellularLocation>
    <text evidence="1">Localizes to the division septum.</text>
</comment>
<comment type="similarity">
    <text evidence="1">Belongs to the FtsB family.</text>
</comment>
<name>FTSB_SALAR</name>
<proteinExistence type="inferred from homology"/>
<accession>A9MF27</accession>
<feature type="chain" id="PRO_1000082456" description="Cell division protein FtsB">
    <location>
        <begin position="1"/>
        <end position="103"/>
    </location>
</feature>
<feature type="topological domain" description="Cytoplasmic" evidence="1">
    <location>
        <begin position="1"/>
        <end position="3"/>
    </location>
</feature>
<feature type="transmembrane region" description="Helical" evidence="1">
    <location>
        <begin position="4"/>
        <end position="21"/>
    </location>
</feature>
<feature type="topological domain" description="Periplasmic" evidence="1">
    <location>
        <begin position="22"/>
        <end position="103"/>
    </location>
</feature>
<feature type="coiled-coil region" evidence="1">
    <location>
        <begin position="33"/>
        <end position="62"/>
    </location>
</feature>
<sequence length="103" mass="11622">MGKLTLLLLALLVWLQYSLWFGKNGIHDYSRVNDDVVAQQATNAKLKARNDQLFAEIDDLNGGQEAIEERARNELSMTKPGETFYRLVPDASKRAQTAGQNNR</sequence>
<organism>
    <name type="scientific">Salmonella arizonae (strain ATCC BAA-731 / CDC346-86 / RSK2980)</name>
    <dbReference type="NCBI Taxonomy" id="41514"/>
    <lineage>
        <taxon>Bacteria</taxon>
        <taxon>Pseudomonadati</taxon>
        <taxon>Pseudomonadota</taxon>
        <taxon>Gammaproteobacteria</taxon>
        <taxon>Enterobacterales</taxon>
        <taxon>Enterobacteriaceae</taxon>
        <taxon>Salmonella</taxon>
    </lineage>
</organism>
<keyword id="KW-0131">Cell cycle</keyword>
<keyword id="KW-0132">Cell division</keyword>
<keyword id="KW-0997">Cell inner membrane</keyword>
<keyword id="KW-1003">Cell membrane</keyword>
<keyword id="KW-0175">Coiled coil</keyword>
<keyword id="KW-0472">Membrane</keyword>
<keyword id="KW-1185">Reference proteome</keyword>
<keyword id="KW-0812">Transmembrane</keyword>
<keyword id="KW-1133">Transmembrane helix</keyword>
<evidence type="ECO:0000255" key="1">
    <source>
        <dbReference type="HAMAP-Rule" id="MF_00599"/>
    </source>
</evidence>
<gene>
    <name evidence="1" type="primary">ftsB</name>
    <name type="ordered locus">SARI_00025</name>
</gene>
<dbReference type="EMBL" id="CP000880">
    <property type="protein sequence ID" value="ABX19979.1"/>
    <property type="molecule type" value="Genomic_DNA"/>
</dbReference>
<dbReference type="SMR" id="A9MF27"/>
<dbReference type="STRING" id="41514.SARI_00025"/>
<dbReference type="KEGG" id="ses:SARI_00025"/>
<dbReference type="HOGENOM" id="CLU_134863_5_2_6"/>
<dbReference type="Proteomes" id="UP000002084">
    <property type="component" value="Chromosome"/>
</dbReference>
<dbReference type="GO" id="GO:0032153">
    <property type="term" value="C:cell division site"/>
    <property type="evidence" value="ECO:0007669"/>
    <property type="project" value="UniProtKB-UniRule"/>
</dbReference>
<dbReference type="GO" id="GO:0030428">
    <property type="term" value="C:cell septum"/>
    <property type="evidence" value="ECO:0007669"/>
    <property type="project" value="TreeGrafter"/>
</dbReference>
<dbReference type="GO" id="GO:0005886">
    <property type="term" value="C:plasma membrane"/>
    <property type="evidence" value="ECO:0007669"/>
    <property type="project" value="UniProtKB-SubCell"/>
</dbReference>
<dbReference type="GO" id="GO:0043093">
    <property type="term" value="P:FtsZ-dependent cytokinesis"/>
    <property type="evidence" value="ECO:0007669"/>
    <property type="project" value="UniProtKB-UniRule"/>
</dbReference>
<dbReference type="FunFam" id="1.20.5.400:FF:000001">
    <property type="entry name" value="Cell division protein FtsB"/>
    <property type="match status" value="1"/>
</dbReference>
<dbReference type="Gene3D" id="1.20.5.400">
    <property type="match status" value="1"/>
</dbReference>
<dbReference type="HAMAP" id="MF_00599">
    <property type="entry name" value="FtsB"/>
    <property type="match status" value="1"/>
</dbReference>
<dbReference type="InterPro" id="IPR023081">
    <property type="entry name" value="Cell_div_FtsB"/>
</dbReference>
<dbReference type="InterPro" id="IPR007060">
    <property type="entry name" value="FtsL/DivIC"/>
</dbReference>
<dbReference type="NCBIfam" id="NF002058">
    <property type="entry name" value="PRK00888.1"/>
    <property type="match status" value="1"/>
</dbReference>
<dbReference type="PANTHER" id="PTHR37485">
    <property type="entry name" value="CELL DIVISION PROTEIN FTSB"/>
    <property type="match status" value="1"/>
</dbReference>
<dbReference type="PANTHER" id="PTHR37485:SF1">
    <property type="entry name" value="CELL DIVISION PROTEIN FTSB"/>
    <property type="match status" value="1"/>
</dbReference>
<dbReference type="Pfam" id="PF04977">
    <property type="entry name" value="DivIC"/>
    <property type="match status" value="1"/>
</dbReference>
<protein>
    <recommendedName>
        <fullName evidence="1">Cell division protein FtsB</fullName>
    </recommendedName>
</protein>
<reference key="1">
    <citation type="submission" date="2007-11" db="EMBL/GenBank/DDBJ databases">
        <authorList>
            <consortium name="The Salmonella enterica serovar Arizonae Genome Sequencing Project"/>
            <person name="McClelland M."/>
            <person name="Sanderson E.K."/>
            <person name="Porwollik S."/>
            <person name="Spieth J."/>
            <person name="Clifton W.S."/>
            <person name="Fulton R."/>
            <person name="Chunyan W."/>
            <person name="Wollam A."/>
            <person name="Shah N."/>
            <person name="Pepin K."/>
            <person name="Bhonagiri V."/>
            <person name="Nash W."/>
            <person name="Johnson M."/>
            <person name="Thiruvilangam P."/>
            <person name="Wilson R."/>
        </authorList>
    </citation>
    <scope>NUCLEOTIDE SEQUENCE [LARGE SCALE GENOMIC DNA]</scope>
    <source>
        <strain>ATCC BAA-731 / CDC346-86 / RSK2980</strain>
    </source>
</reference>